<feature type="chain" id="PRO_0000425407" description="Protein trichome birefringence-like 42">
    <location>
        <begin position="1"/>
        <end position="359"/>
    </location>
</feature>
<feature type="transmembrane region" description="Helical; Signal-anchor for type II membrane protein" evidence="3">
    <location>
        <begin position="7"/>
        <end position="25"/>
    </location>
</feature>
<feature type="short sequence motif" description="GDS motif">
    <location>
        <begin position="110"/>
        <end position="112"/>
    </location>
</feature>
<feature type="short sequence motif" description="DCXHWCLPGXXDXWN motif">
    <location>
        <begin position="335"/>
        <end position="349"/>
    </location>
</feature>
<feature type="splice variant" id="VSP_053697" description="In isoform 2." evidence="4">
    <original>MNFHQVLFLLLLIFLVDLS</original>
    <variation>MILNSLLETQAP</variation>
    <location>
        <begin position="1"/>
        <end position="19"/>
    </location>
</feature>
<feature type="splice variant" id="VSP_053698" description="In isoform 2." evidence="4">
    <location>
        <begin position="209"/>
        <end position="261"/>
    </location>
</feature>
<sequence length="359" mass="40568">MNFHQVLFLLLLIFLVDLSDYGVLADKTNDGYKNATKCNIYQGRWIYDNSSNPLYGTSTCPFIGLDCQKFGRPDKNYLHYRWQPTGCDIPRFNGRDFLTRFKGKKILFVGDSLSNNMWVSLSCMLHAAVPNAKYTFQLNKGLSTFTIPEYGISVNFLKNGFLVDLVSDKTRGLILKLDSISRGNQWLGSDVAIFNTFHWWSHTGRAKTWDYFQTGDKIVKEMNRMEAFKIALTTWSKWIDHNIDPSKTRVFYQGVSPVHLNGGEWGKPGKTCLGETVPVQGPSYPGRPNEGEAIVKSVIGRMAKPVELLDVTAMTEMRKDGHPSIYAGGGDRLNDCSHWCLPGVPDAWNQLLYTALLSH</sequence>
<comment type="function">
    <text evidence="1 2">May act as a bridging protein that binds pectin and other cell wall polysaccharides. Probably involved in maintaining esterification of pectins (By similarity). May be involved in the specific O-acetylation of cell wall polymers (By similarity).</text>
</comment>
<comment type="subcellular location">
    <subcellularLocation>
        <location evidence="4">Membrane</location>
        <topology evidence="4">Single-pass type II membrane protein</topology>
    </subcellularLocation>
</comment>
<comment type="alternative products">
    <event type="alternative splicing"/>
    <isoform>
        <id>Q9ZV89-1</id>
        <name>1</name>
        <sequence type="displayed"/>
    </isoform>
    <isoform>
        <id>Q9ZV89-2</id>
        <name>2</name>
        <sequence type="described" ref="VSP_053697 VSP_053698"/>
    </isoform>
</comment>
<comment type="miscellaneous">
    <text evidence="5">Contains 2 motifs that are conserved in esterases, but it is unlikely that this protein belongs to the catalytically active pectin esterases.</text>
</comment>
<comment type="similarity">
    <text evidence="4">Belongs to the PC-esterase family. TBL subfamily.</text>
</comment>
<reference key="1">
    <citation type="journal article" date="2000" name="Nature">
        <title>Sequence and analysis of chromosome 1 of the plant Arabidopsis thaliana.</title>
        <authorList>
            <person name="Theologis A."/>
            <person name="Ecker J.R."/>
            <person name="Palm C.J."/>
            <person name="Federspiel N.A."/>
            <person name="Kaul S."/>
            <person name="White O."/>
            <person name="Alonso J."/>
            <person name="Altafi H."/>
            <person name="Araujo R."/>
            <person name="Bowman C.L."/>
            <person name="Brooks S.Y."/>
            <person name="Buehler E."/>
            <person name="Chan A."/>
            <person name="Chao Q."/>
            <person name="Chen H."/>
            <person name="Cheuk R.F."/>
            <person name="Chin C.W."/>
            <person name="Chung M.K."/>
            <person name="Conn L."/>
            <person name="Conway A.B."/>
            <person name="Conway A.R."/>
            <person name="Creasy T.H."/>
            <person name="Dewar K."/>
            <person name="Dunn P."/>
            <person name="Etgu P."/>
            <person name="Feldblyum T.V."/>
            <person name="Feng J.-D."/>
            <person name="Fong B."/>
            <person name="Fujii C.Y."/>
            <person name="Gill J.E."/>
            <person name="Goldsmith A.D."/>
            <person name="Haas B."/>
            <person name="Hansen N.F."/>
            <person name="Hughes B."/>
            <person name="Huizar L."/>
            <person name="Hunter J.L."/>
            <person name="Jenkins J."/>
            <person name="Johnson-Hopson C."/>
            <person name="Khan S."/>
            <person name="Khaykin E."/>
            <person name="Kim C.J."/>
            <person name="Koo H.L."/>
            <person name="Kremenetskaia I."/>
            <person name="Kurtz D.B."/>
            <person name="Kwan A."/>
            <person name="Lam B."/>
            <person name="Langin-Hooper S."/>
            <person name="Lee A."/>
            <person name="Lee J.M."/>
            <person name="Lenz C.A."/>
            <person name="Li J.H."/>
            <person name="Li Y.-P."/>
            <person name="Lin X."/>
            <person name="Liu S.X."/>
            <person name="Liu Z.A."/>
            <person name="Luros J.S."/>
            <person name="Maiti R."/>
            <person name="Marziali A."/>
            <person name="Militscher J."/>
            <person name="Miranda M."/>
            <person name="Nguyen M."/>
            <person name="Nierman W.C."/>
            <person name="Osborne B.I."/>
            <person name="Pai G."/>
            <person name="Peterson J."/>
            <person name="Pham P.K."/>
            <person name="Rizzo M."/>
            <person name="Rooney T."/>
            <person name="Rowley D."/>
            <person name="Sakano H."/>
            <person name="Salzberg S.L."/>
            <person name="Schwartz J.R."/>
            <person name="Shinn P."/>
            <person name="Southwick A.M."/>
            <person name="Sun H."/>
            <person name="Tallon L.J."/>
            <person name="Tambunga G."/>
            <person name="Toriumi M.J."/>
            <person name="Town C.D."/>
            <person name="Utterback T."/>
            <person name="Van Aken S."/>
            <person name="Vaysberg M."/>
            <person name="Vysotskaia V.S."/>
            <person name="Walker M."/>
            <person name="Wu D."/>
            <person name="Yu G."/>
            <person name="Fraser C.M."/>
            <person name="Venter J.C."/>
            <person name="Davis R.W."/>
        </authorList>
    </citation>
    <scope>NUCLEOTIDE SEQUENCE [LARGE SCALE GENOMIC DNA]</scope>
    <source>
        <strain>cv. Columbia</strain>
    </source>
</reference>
<reference key="2">
    <citation type="journal article" date="2017" name="Plant J.">
        <title>Araport11: a complete reannotation of the Arabidopsis thaliana reference genome.</title>
        <authorList>
            <person name="Cheng C.Y."/>
            <person name="Krishnakumar V."/>
            <person name="Chan A.P."/>
            <person name="Thibaud-Nissen F."/>
            <person name="Schobel S."/>
            <person name="Town C.D."/>
        </authorList>
    </citation>
    <scope>GENOME REANNOTATION</scope>
    <source>
        <strain>cv. Columbia</strain>
    </source>
</reference>
<reference key="3">
    <citation type="journal article" date="2007" name="Plant J.">
        <title>Arabidopsis ESK1 encodes a novel regulator of freezing tolerance.</title>
        <authorList>
            <person name="Xin Z."/>
            <person name="Mandaokar A."/>
            <person name="Chen J."/>
            <person name="Last R.L."/>
            <person name="Browse J."/>
        </authorList>
    </citation>
    <scope>GENE FAMILY</scope>
    <source>
        <strain>cv. Columbia</strain>
    </source>
</reference>
<reference key="4">
    <citation type="journal article" date="2010" name="Plant Physiol.">
        <title>TRICHOME BIREFRINGENCE and its homolog AT5G01360 encode plant-specific DUF231 proteins required for cellulose biosynthesis in Arabidopsis.</title>
        <authorList>
            <person name="Bischoff V."/>
            <person name="Nita S."/>
            <person name="Neumetzler L."/>
            <person name="Schindelasch D."/>
            <person name="Urbain A."/>
            <person name="Eshed R."/>
            <person name="Persson S."/>
            <person name="Delmer D."/>
            <person name="Scheible W.R."/>
        </authorList>
    </citation>
    <scope>GENE FAMILY</scope>
    <scope>NOMENCLATURE</scope>
</reference>
<reference key="5">
    <citation type="journal article" date="2010" name="Plant Signal. Behav.">
        <title>Involvement of TBL/DUF231 proteins into cell wall biology.</title>
        <authorList>
            <person name="Bischoff V."/>
            <person name="Selbig J."/>
            <person name="Scheible W.R."/>
        </authorList>
    </citation>
    <scope>3D-STRUCTURE MODELING</scope>
</reference>
<gene>
    <name type="primary">TBL42</name>
    <name type="ordered locus">At1g78710</name>
    <name type="ORF">F9K20.25</name>
</gene>
<organism>
    <name type="scientific">Arabidopsis thaliana</name>
    <name type="common">Mouse-ear cress</name>
    <dbReference type="NCBI Taxonomy" id="3702"/>
    <lineage>
        <taxon>Eukaryota</taxon>
        <taxon>Viridiplantae</taxon>
        <taxon>Streptophyta</taxon>
        <taxon>Embryophyta</taxon>
        <taxon>Tracheophyta</taxon>
        <taxon>Spermatophyta</taxon>
        <taxon>Magnoliopsida</taxon>
        <taxon>eudicotyledons</taxon>
        <taxon>Gunneridae</taxon>
        <taxon>Pentapetalae</taxon>
        <taxon>rosids</taxon>
        <taxon>malvids</taxon>
        <taxon>Brassicales</taxon>
        <taxon>Brassicaceae</taxon>
        <taxon>Camelineae</taxon>
        <taxon>Arabidopsis</taxon>
    </lineage>
</organism>
<dbReference type="EMBL" id="AC005679">
    <property type="protein sequence ID" value="AAC83039.1"/>
    <property type="molecule type" value="Genomic_DNA"/>
</dbReference>
<dbReference type="EMBL" id="CP002684">
    <property type="protein sequence ID" value="AEE36141.1"/>
    <property type="molecule type" value="Genomic_DNA"/>
</dbReference>
<dbReference type="EMBL" id="CP002684">
    <property type="protein sequence ID" value="AEE36142.1"/>
    <property type="molecule type" value="Genomic_DNA"/>
</dbReference>
<dbReference type="PIR" id="A96816">
    <property type="entry name" value="A96816"/>
</dbReference>
<dbReference type="RefSeq" id="NP_001154476.1">
    <molecule id="Q9ZV89-2"/>
    <property type="nucleotide sequence ID" value="NM_001161004.1"/>
</dbReference>
<dbReference type="RefSeq" id="NP_177992.1">
    <molecule id="Q9ZV89-1"/>
    <property type="nucleotide sequence ID" value="NM_106518.2"/>
</dbReference>
<dbReference type="SMR" id="Q9ZV89"/>
<dbReference type="PaxDb" id="3702-AT1G78710.1"/>
<dbReference type="ProteomicsDB" id="234204">
    <molecule id="Q9ZV89-1"/>
</dbReference>
<dbReference type="EnsemblPlants" id="AT1G78710.1">
    <molecule id="Q9ZV89-1"/>
    <property type="protein sequence ID" value="AT1G78710.1"/>
    <property type="gene ID" value="AT1G78710"/>
</dbReference>
<dbReference type="EnsemblPlants" id="AT1G78710.2">
    <molecule id="Q9ZV89-2"/>
    <property type="protein sequence ID" value="AT1G78710.2"/>
    <property type="gene ID" value="AT1G78710"/>
</dbReference>
<dbReference type="GeneID" id="844207"/>
<dbReference type="Gramene" id="AT1G78710.1">
    <molecule id="Q9ZV89-1"/>
    <property type="protein sequence ID" value="AT1G78710.1"/>
    <property type="gene ID" value="AT1G78710"/>
</dbReference>
<dbReference type="Gramene" id="AT1G78710.2">
    <molecule id="Q9ZV89-2"/>
    <property type="protein sequence ID" value="AT1G78710.2"/>
    <property type="gene ID" value="AT1G78710"/>
</dbReference>
<dbReference type="KEGG" id="ath:AT1G78710"/>
<dbReference type="Araport" id="AT1G78710"/>
<dbReference type="TAIR" id="AT1G78710">
    <property type="gene designation" value="TBL42"/>
</dbReference>
<dbReference type="eggNOG" id="ENOG502QS9I">
    <property type="taxonomic scope" value="Eukaryota"/>
</dbReference>
<dbReference type="HOGENOM" id="CLU_020953_3_0_1"/>
<dbReference type="InParanoid" id="Q9ZV89"/>
<dbReference type="OMA" id="HTNEGED"/>
<dbReference type="PhylomeDB" id="Q9ZV89"/>
<dbReference type="PRO" id="PR:Q9ZV89"/>
<dbReference type="Proteomes" id="UP000006548">
    <property type="component" value="Chromosome 1"/>
</dbReference>
<dbReference type="ExpressionAtlas" id="Q9ZV89">
    <property type="expression patterns" value="baseline and differential"/>
</dbReference>
<dbReference type="GO" id="GO:0016020">
    <property type="term" value="C:membrane"/>
    <property type="evidence" value="ECO:0007669"/>
    <property type="project" value="UniProtKB-SubCell"/>
</dbReference>
<dbReference type="GO" id="GO:0016413">
    <property type="term" value="F:O-acetyltransferase activity"/>
    <property type="evidence" value="ECO:0007669"/>
    <property type="project" value="InterPro"/>
</dbReference>
<dbReference type="InterPro" id="IPR029962">
    <property type="entry name" value="TBL"/>
</dbReference>
<dbReference type="InterPro" id="IPR026057">
    <property type="entry name" value="TBL_C"/>
</dbReference>
<dbReference type="InterPro" id="IPR025846">
    <property type="entry name" value="TBL_N"/>
</dbReference>
<dbReference type="PANTHER" id="PTHR32285:SF30">
    <property type="entry name" value="PROTEIN TRICHOME BIREFRINGENCE-LIKE 42"/>
    <property type="match status" value="1"/>
</dbReference>
<dbReference type="PANTHER" id="PTHR32285">
    <property type="entry name" value="PROTEIN TRICHOME BIREFRINGENCE-LIKE 9-RELATED"/>
    <property type="match status" value="1"/>
</dbReference>
<dbReference type="Pfam" id="PF13839">
    <property type="entry name" value="PC-Esterase"/>
    <property type="match status" value="1"/>
</dbReference>
<dbReference type="Pfam" id="PF14416">
    <property type="entry name" value="PMR5N"/>
    <property type="match status" value="1"/>
</dbReference>
<proteinExistence type="inferred from homology"/>
<protein>
    <recommendedName>
        <fullName>Protein trichome birefringence-like 42</fullName>
    </recommendedName>
</protein>
<keyword id="KW-0025">Alternative splicing</keyword>
<keyword id="KW-0472">Membrane</keyword>
<keyword id="KW-1185">Reference proteome</keyword>
<keyword id="KW-0735">Signal-anchor</keyword>
<keyword id="KW-0812">Transmembrane</keyword>
<keyword id="KW-1133">Transmembrane helix</keyword>
<name>TBL42_ARATH</name>
<evidence type="ECO:0000250" key="1">
    <source>
        <dbReference type="UniProtKB" id="Q9FG35"/>
    </source>
</evidence>
<evidence type="ECO:0000250" key="2">
    <source>
        <dbReference type="UniProtKB" id="Q9LY46"/>
    </source>
</evidence>
<evidence type="ECO:0000255" key="3"/>
<evidence type="ECO:0000305" key="4"/>
<evidence type="ECO:0000305" key="5">
    <source>
    </source>
</evidence>
<accession>Q9ZV89</accession>
<accession>F4IBU0</accession>